<name>AHT1_ORYSJ</name>
<dbReference type="EC" id="2.3.1.-" evidence="7"/>
<dbReference type="EMBL" id="AL606646">
    <property type="protein sequence ID" value="CAE03579.1"/>
    <property type="molecule type" value="Genomic_DNA"/>
</dbReference>
<dbReference type="EMBL" id="AP008210">
    <property type="protein sequence ID" value="BAF16085.2"/>
    <property type="molecule type" value="Genomic_DNA"/>
</dbReference>
<dbReference type="EMBL" id="AP014960">
    <property type="protein sequence ID" value="BAS91492.1"/>
    <property type="molecule type" value="Genomic_DNA"/>
</dbReference>
<dbReference type="EMBL" id="CM000141">
    <property type="protein sequence ID" value="EAZ32318.1"/>
    <property type="molecule type" value="Genomic_DNA"/>
</dbReference>
<dbReference type="RefSeq" id="XP_015634184.1">
    <property type="nucleotide sequence ID" value="XM_015778698.1"/>
</dbReference>
<dbReference type="SMR" id="Q7XPK7"/>
<dbReference type="FunCoup" id="Q7XPK7">
    <property type="interactions" value="2"/>
</dbReference>
<dbReference type="STRING" id="39947.Q7XPK7"/>
<dbReference type="PaxDb" id="39947-Q7XPK7"/>
<dbReference type="EnsemblPlants" id="Os04t0664600-01">
    <property type="protein sequence ID" value="Os04t0664600-01"/>
    <property type="gene ID" value="Os04g0664600"/>
</dbReference>
<dbReference type="Gramene" id="Os04t0664600-01">
    <property type="protein sequence ID" value="Os04t0664600-01"/>
    <property type="gene ID" value="Os04g0664600"/>
</dbReference>
<dbReference type="KEGG" id="dosa:Os04g0664600"/>
<dbReference type="eggNOG" id="ENOG502QTU2">
    <property type="taxonomic scope" value="Eukaryota"/>
</dbReference>
<dbReference type="HOGENOM" id="CLU_014546_6_2_1"/>
<dbReference type="InParanoid" id="Q7XPK7"/>
<dbReference type="OMA" id="CCYSIDL"/>
<dbReference type="OrthoDB" id="671439at2759"/>
<dbReference type="Proteomes" id="UP000000763">
    <property type="component" value="Chromosome 4"/>
</dbReference>
<dbReference type="Proteomes" id="UP000007752">
    <property type="component" value="Chromosome 4"/>
</dbReference>
<dbReference type="Proteomes" id="UP000059680">
    <property type="component" value="Chromosome 4"/>
</dbReference>
<dbReference type="GO" id="GO:0016747">
    <property type="term" value="F:acyltransferase activity, transferring groups other than amino-acyl groups"/>
    <property type="evidence" value="ECO:0000318"/>
    <property type="project" value="GO_Central"/>
</dbReference>
<dbReference type="GO" id="GO:0050734">
    <property type="term" value="F:hydroxycinnamoyltransferase activity"/>
    <property type="evidence" value="ECO:0000314"/>
    <property type="project" value="UniProtKB"/>
</dbReference>
<dbReference type="FunFam" id="3.30.559.10:FF:000008">
    <property type="entry name" value="Tryptamine hydroxycinnamoyl transferase"/>
    <property type="match status" value="1"/>
</dbReference>
<dbReference type="FunFam" id="3.30.559.10:FF:000014">
    <property type="entry name" value="Tryptamine hydroxycinnamoyl transferase"/>
    <property type="match status" value="1"/>
</dbReference>
<dbReference type="Gene3D" id="3.30.559.10">
    <property type="entry name" value="Chloramphenicol acetyltransferase-like domain"/>
    <property type="match status" value="2"/>
</dbReference>
<dbReference type="InterPro" id="IPR023213">
    <property type="entry name" value="CAT-like_dom_sf"/>
</dbReference>
<dbReference type="InterPro" id="IPR050317">
    <property type="entry name" value="Plant_Fungal_Acyltransferase"/>
</dbReference>
<dbReference type="PANTHER" id="PTHR31642:SF13">
    <property type="entry name" value="AGMATINE HYDROXYCINNAMOYLTRANSFERASE 1"/>
    <property type="match status" value="1"/>
</dbReference>
<dbReference type="PANTHER" id="PTHR31642">
    <property type="entry name" value="TRICHOTHECENE 3-O-ACETYLTRANSFERASE"/>
    <property type="match status" value="1"/>
</dbReference>
<dbReference type="Pfam" id="PF02458">
    <property type="entry name" value="Transferase"/>
    <property type="match status" value="1"/>
</dbReference>
<sequence>MKITVHSSKAVKPVYGDAVAAPSTADVVPLSVFDRANFDTYVSVIYAFRPPAPANSVLEAGLAKALAEYREWAGRLGVDGDGDRAILLNDAGARFVEATADVTLDSVVPLEPTPRVTSLHPSADDDGAEAEVMMVQVTRFACGSLAVGFTAHHMVSDGRATSNFFLAWSQATRGVAIHPVPVHDRASFFTPRDPPRVDYEHRGVEFKTCEKLDRNENNDDGHGHGHDGEVVVTHKVHFSREFISKLKALASAGGGQRSYSTLQCVVAHLWRCITMARGLEGSVATSVSIAVDGRARMSPPVLDGYTGNVVLWARPTATARELVTMPLQHAMGLINRAVARINDGYFKSFVDFANSGAVEEERLVASADAAEMVLSPNIEVDSWLRIPFYELDFGSGQPFLFTPSYLPVEGLLILLPSFSGDGSVDAYVPLFSHDMDTFKNCCYVLPELS</sequence>
<comment type="function">
    <text evidence="2 3 4">Hydroxycinnamoyl transferase that catalyzes the transfer of an acyl from p-coumaryol-CoA to agmatine, to produce coumaroyl agmatine. Can use feruloyl-CoA, caffeoyl-CoA and sinapoyl-CoA as acyl donors (PubMed:24908251, PubMed:27015846, PubMed:27354554). Seems to be able to transfer the acyl group from p-coumaroyl-CoA and feruloyl-CoA to the acyl acceptors putrescine and spermidine (PubMed:24908251).</text>
</comment>
<comment type="biophysicochemical properties">
    <kinetics>
        <KM evidence="3">43.6 uM for feruloyl-CoA</KM>
        <KM evidence="3">45.3 uM for agmatine</KM>
    </kinetics>
</comment>
<comment type="tissue specificity">
    <text evidence="3">Highly expressed in roots. Expressed at low levels in flowers.</text>
</comment>
<comment type="similarity">
    <text evidence="7">Belongs to the plant acyltransferase family.</text>
</comment>
<evidence type="ECO:0000250" key="1">
    <source>
        <dbReference type="UniProtKB" id="Q8W1W9"/>
    </source>
</evidence>
<evidence type="ECO:0000269" key="2">
    <source>
    </source>
</evidence>
<evidence type="ECO:0000269" key="3">
    <source>
    </source>
</evidence>
<evidence type="ECO:0000269" key="4">
    <source>
    </source>
</evidence>
<evidence type="ECO:0000303" key="5">
    <source>
    </source>
</evidence>
<evidence type="ECO:0000303" key="6">
    <source>
    </source>
</evidence>
<evidence type="ECO:0000305" key="7"/>
<evidence type="ECO:0000312" key="8">
    <source>
        <dbReference type="EMBL" id="BAS91492.1"/>
    </source>
</evidence>
<evidence type="ECO:0000312" key="9">
    <source>
        <dbReference type="EMBL" id="CAE03579.1"/>
    </source>
</evidence>
<evidence type="ECO:0000312" key="10">
    <source>
        <dbReference type="EMBL" id="EAZ32318.1"/>
    </source>
</evidence>
<reference key="1">
    <citation type="journal article" date="2002" name="Nature">
        <title>Sequence and analysis of rice chromosome 4.</title>
        <authorList>
            <person name="Feng Q."/>
            <person name="Zhang Y."/>
            <person name="Hao P."/>
            <person name="Wang S."/>
            <person name="Fu G."/>
            <person name="Huang Y."/>
            <person name="Li Y."/>
            <person name="Zhu J."/>
            <person name="Liu Y."/>
            <person name="Hu X."/>
            <person name="Jia P."/>
            <person name="Zhang Y."/>
            <person name="Zhao Q."/>
            <person name="Ying K."/>
            <person name="Yu S."/>
            <person name="Tang Y."/>
            <person name="Weng Q."/>
            <person name="Zhang L."/>
            <person name="Lu Y."/>
            <person name="Mu J."/>
            <person name="Lu Y."/>
            <person name="Zhang L.S."/>
            <person name="Yu Z."/>
            <person name="Fan D."/>
            <person name="Liu X."/>
            <person name="Lu T."/>
            <person name="Li C."/>
            <person name="Wu Y."/>
            <person name="Sun T."/>
            <person name="Lei H."/>
            <person name="Li T."/>
            <person name="Hu H."/>
            <person name="Guan J."/>
            <person name="Wu M."/>
            <person name="Zhang R."/>
            <person name="Zhou B."/>
            <person name="Chen Z."/>
            <person name="Chen L."/>
            <person name="Jin Z."/>
            <person name="Wang R."/>
            <person name="Yin H."/>
            <person name="Cai Z."/>
            <person name="Ren S."/>
            <person name="Lv G."/>
            <person name="Gu W."/>
            <person name="Zhu G."/>
            <person name="Tu Y."/>
            <person name="Jia J."/>
            <person name="Zhang Y."/>
            <person name="Chen J."/>
            <person name="Kang H."/>
            <person name="Chen X."/>
            <person name="Shao C."/>
            <person name="Sun Y."/>
            <person name="Hu Q."/>
            <person name="Zhang X."/>
            <person name="Zhang W."/>
            <person name="Wang L."/>
            <person name="Ding C."/>
            <person name="Sheng H."/>
            <person name="Gu J."/>
            <person name="Chen S."/>
            <person name="Ni L."/>
            <person name="Zhu F."/>
            <person name="Chen W."/>
            <person name="Lan L."/>
            <person name="Lai Y."/>
            <person name="Cheng Z."/>
            <person name="Gu M."/>
            <person name="Jiang J."/>
            <person name="Li J."/>
            <person name="Hong G."/>
            <person name="Xue Y."/>
            <person name="Han B."/>
        </authorList>
    </citation>
    <scope>NUCLEOTIDE SEQUENCE [LARGE SCALE GENOMIC DNA]</scope>
    <source>
        <strain>cv. Nipponbare</strain>
    </source>
</reference>
<reference key="2">
    <citation type="journal article" date="2005" name="Nature">
        <title>The map-based sequence of the rice genome.</title>
        <authorList>
            <consortium name="International rice genome sequencing project (IRGSP)"/>
        </authorList>
    </citation>
    <scope>NUCLEOTIDE SEQUENCE [LARGE SCALE GENOMIC DNA]</scope>
    <source>
        <strain>cv. Nipponbare</strain>
    </source>
</reference>
<reference key="3">
    <citation type="journal article" date="2008" name="Nucleic Acids Res.">
        <title>The rice annotation project database (RAP-DB): 2008 update.</title>
        <authorList>
            <consortium name="The rice annotation project (RAP)"/>
        </authorList>
    </citation>
    <scope>GENOME REANNOTATION</scope>
    <source>
        <strain>cv. Nipponbare</strain>
    </source>
</reference>
<reference key="4">
    <citation type="journal article" date="2013" name="Rice">
        <title>Improvement of the Oryza sativa Nipponbare reference genome using next generation sequence and optical map data.</title>
        <authorList>
            <person name="Kawahara Y."/>
            <person name="de la Bastide M."/>
            <person name="Hamilton J.P."/>
            <person name="Kanamori H."/>
            <person name="McCombie W.R."/>
            <person name="Ouyang S."/>
            <person name="Schwartz D.C."/>
            <person name="Tanaka T."/>
            <person name="Wu J."/>
            <person name="Zhou S."/>
            <person name="Childs K.L."/>
            <person name="Davidson R.M."/>
            <person name="Lin H."/>
            <person name="Quesada-Ocampo L."/>
            <person name="Vaillancourt B."/>
            <person name="Sakai H."/>
            <person name="Lee S.S."/>
            <person name="Kim J."/>
            <person name="Numa H."/>
            <person name="Itoh T."/>
            <person name="Buell C.R."/>
            <person name="Matsumoto T."/>
        </authorList>
    </citation>
    <scope>GENOME REANNOTATION</scope>
    <source>
        <strain>cv. Nipponbare</strain>
    </source>
</reference>
<reference key="5">
    <citation type="journal article" date="2005" name="PLoS Biol.">
        <title>The genomes of Oryza sativa: a history of duplications.</title>
        <authorList>
            <person name="Yu J."/>
            <person name="Wang J."/>
            <person name="Lin W."/>
            <person name="Li S."/>
            <person name="Li H."/>
            <person name="Zhou J."/>
            <person name="Ni P."/>
            <person name="Dong W."/>
            <person name="Hu S."/>
            <person name="Zeng C."/>
            <person name="Zhang J."/>
            <person name="Zhang Y."/>
            <person name="Li R."/>
            <person name="Xu Z."/>
            <person name="Li S."/>
            <person name="Li X."/>
            <person name="Zheng H."/>
            <person name="Cong L."/>
            <person name="Lin L."/>
            <person name="Yin J."/>
            <person name="Geng J."/>
            <person name="Li G."/>
            <person name="Shi J."/>
            <person name="Liu J."/>
            <person name="Lv H."/>
            <person name="Li J."/>
            <person name="Wang J."/>
            <person name="Deng Y."/>
            <person name="Ran L."/>
            <person name="Shi X."/>
            <person name="Wang X."/>
            <person name="Wu Q."/>
            <person name="Li C."/>
            <person name="Ren X."/>
            <person name="Wang J."/>
            <person name="Wang X."/>
            <person name="Li D."/>
            <person name="Liu D."/>
            <person name="Zhang X."/>
            <person name="Ji Z."/>
            <person name="Zhao W."/>
            <person name="Sun Y."/>
            <person name="Zhang Z."/>
            <person name="Bao J."/>
            <person name="Han Y."/>
            <person name="Dong L."/>
            <person name="Ji J."/>
            <person name="Chen P."/>
            <person name="Wu S."/>
            <person name="Liu J."/>
            <person name="Xiao Y."/>
            <person name="Bu D."/>
            <person name="Tan J."/>
            <person name="Yang L."/>
            <person name="Ye C."/>
            <person name="Zhang J."/>
            <person name="Xu J."/>
            <person name="Zhou Y."/>
            <person name="Yu Y."/>
            <person name="Zhang B."/>
            <person name="Zhuang S."/>
            <person name="Wei H."/>
            <person name="Liu B."/>
            <person name="Lei M."/>
            <person name="Yu H."/>
            <person name="Li Y."/>
            <person name="Xu H."/>
            <person name="Wei S."/>
            <person name="He X."/>
            <person name="Fang L."/>
            <person name="Zhang Z."/>
            <person name="Zhang Y."/>
            <person name="Huang X."/>
            <person name="Su Z."/>
            <person name="Tong W."/>
            <person name="Li J."/>
            <person name="Tong Z."/>
            <person name="Li S."/>
            <person name="Ye J."/>
            <person name="Wang L."/>
            <person name="Fang L."/>
            <person name="Lei T."/>
            <person name="Chen C.-S."/>
            <person name="Chen H.-C."/>
            <person name="Xu Z."/>
            <person name="Li H."/>
            <person name="Huang H."/>
            <person name="Zhang F."/>
            <person name="Xu H."/>
            <person name="Li N."/>
            <person name="Zhao C."/>
            <person name="Li S."/>
            <person name="Dong L."/>
            <person name="Huang Y."/>
            <person name="Li L."/>
            <person name="Xi Y."/>
            <person name="Qi Q."/>
            <person name="Li W."/>
            <person name="Zhang B."/>
            <person name="Hu W."/>
            <person name="Zhang Y."/>
            <person name="Tian X."/>
            <person name="Jiao Y."/>
            <person name="Liang X."/>
            <person name="Jin J."/>
            <person name="Gao L."/>
            <person name="Zheng W."/>
            <person name="Hao B."/>
            <person name="Liu S.-M."/>
            <person name="Wang W."/>
            <person name="Yuan L."/>
            <person name="Cao M."/>
            <person name="McDermott J."/>
            <person name="Samudrala R."/>
            <person name="Wang J."/>
            <person name="Wong G.K.-S."/>
            <person name="Yang H."/>
        </authorList>
    </citation>
    <scope>NUCLEOTIDE SEQUENCE [LARGE SCALE GENOMIC DNA]</scope>
    <source>
        <strain>cv. Nipponbare</strain>
    </source>
</reference>
<reference key="6">
    <citation type="journal article" date="2014" name="Nat. Genet.">
        <title>Genome-wide association analyses provide genetic and biochemical insights into natural variation in rice metabolism.</title>
        <authorList>
            <person name="Chen W."/>
            <person name="Gao Y."/>
            <person name="Xie W."/>
            <person name="Gong L."/>
            <person name="Lu K."/>
            <person name="Wang W."/>
            <person name="Li Y."/>
            <person name="Liu X."/>
            <person name="Zhang H."/>
            <person name="Dong H."/>
            <person name="Zhang W."/>
            <person name="Zhang L."/>
            <person name="Yu S."/>
            <person name="Wang G."/>
            <person name="Lian X."/>
            <person name="Luo J."/>
        </authorList>
    </citation>
    <scope>FUNCTION</scope>
</reference>
<reference key="7">
    <citation type="journal article" date="2016" name="J. Integr. Plant Biol.">
        <title>Molecular evidence for biochemical diversification of phenolamide biosynthesis in rice plants.</title>
        <authorList>
            <person name="Tanabe K."/>
            <person name="Hojo Y."/>
            <person name="Shinya T."/>
            <person name="Galis I."/>
        </authorList>
    </citation>
    <scope>FUNCTION</scope>
    <scope>BIOPHYSICOCHEMICAL PROPERTIES</scope>
    <scope>TISSUE SPECIFICITY</scope>
</reference>
<reference key="8">
    <citation type="journal article" date="2016" name="Plant Cell">
        <title>Evolutionarily distinct BAHD N-acyltransferases are responsible for natural variation of aromatic amine conjugates in rice.</title>
        <authorList>
            <person name="Peng M."/>
            <person name="Gao Y."/>
            <person name="Chen W."/>
            <person name="Wang W."/>
            <person name="Shen S."/>
            <person name="Shi J."/>
            <person name="Wang C."/>
            <person name="Zhang Y."/>
            <person name="Zou L."/>
            <person name="Wang S."/>
            <person name="Wan J."/>
            <person name="Liu X."/>
            <person name="Gong L."/>
            <person name="Luo J."/>
        </authorList>
    </citation>
    <scope>FUNCTION</scope>
</reference>
<accession>Q7XPK7</accession>
<accession>A3AYC9</accession>
<accession>Q0J9A2</accession>
<organism>
    <name type="scientific">Oryza sativa subsp. japonica</name>
    <name type="common">Rice</name>
    <dbReference type="NCBI Taxonomy" id="39947"/>
    <lineage>
        <taxon>Eukaryota</taxon>
        <taxon>Viridiplantae</taxon>
        <taxon>Streptophyta</taxon>
        <taxon>Embryophyta</taxon>
        <taxon>Tracheophyta</taxon>
        <taxon>Spermatophyta</taxon>
        <taxon>Magnoliopsida</taxon>
        <taxon>Liliopsida</taxon>
        <taxon>Poales</taxon>
        <taxon>Poaceae</taxon>
        <taxon>BOP clade</taxon>
        <taxon>Oryzoideae</taxon>
        <taxon>Oryzeae</taxon>
        <taxon>Oryzinae</taxon>
        <taxon>Oryza</taxon>
        <taxon>Oryza sativa</taxon>
    </lineage>
</organism>
<feature type="chain" id="PRO_0000437773" description="Agmatine hydroxycinnamoyltransferase 1">
    <location>
        <begin position="1"/>
        <end position="449"/>
    </location>
</feature>
<feature type="active site" description="Proton acceptor" evidence="1">
    <location>
        <position position="153"/>
    </location>
</feature>
<feature type="active site" description="Proton acceptor" evidence="1">
    <location>
        <position position="392"/>
    </location>
</feature>
<feature type="sequence conflict" description="In Ref. 5; EAZ32318." evidence="7" ref="5">
    <original>L</original>
    <variation>P</variation>
    <location>
        <position position="302"/>
    </location>
</feature>
<protein>
    <recommendedName>
        <fullName evidence="6">Agmatine hydroxycinnamoyltransferase 1</fullName>
        <shortName evidence="6">OsAHT1</shortName>
        <ecNumber evidence="7">2.3.1.-</ecNumber>
    </recommendedName>
    <alternativeName>
        <fullName evidence="5">Agmatine hydroxycinnamoyl transferase</fullName>
    </alternativeName>
</protein>
<gene>
    <name evidence="6" type="primary">AHT1</name>
    <name evidence="8" type="ordered locus">Os04g0664600</name>
    <name evidence="7" type="ordered locus">LOC_Os04g56910</name>
    <name evidence="10" type="ORF">OsJ_16526</name>
    <name evidence="9" type="ORF">OSJNBa0087O24.2</name>
</gene>
<keyword id="KW-0012">Acyltransferase</keyword>
<keyword id="KW-1185">Reference proteome</keyword>
<keyword id="KW-0808">Transferase</keyword>
<proteinExistence type="evidence at protein level"/>